<name>RIMO_SYNJB</name>
<comment type="function">
    <text evidence="1">Catalyzes the methylthiolation of an aspartic acid residue of ribosomal protein uS12.</text>
</comment>
<comment type="catalytic activity">
    <reaction evidence="1">
        <text>L-aspartate(89)-[ribosomal protein uS12]-hydrogen + (sulfur carrier)-SH + AH2 + 2 S-adenosyl-L-methionine = 3-methylsulfanyl-L-aspartate(89)-[ribosomal protein uS12]-hydrogen + (sulfur carrier)-H + 5'-deoxyadenosine + L-methionine + A + S-adenosyl-L-homocysteine + 2 H(+)</text>
        <dbReference type="Rhea" id="RHEA:37087"/>
        <dbReference type="Rhea" id="RHEA-COMP:10460"/>
        <dbReference type="Rhea" id="RHEA-COMP:10461"/>
        <dbReference type="Rhea" id="RHEA-COMP:14737"/>
        <dbReference type="Rhea" id="RHEA-COMP:14739"/>
        <dbReference type="ChEBI" id="CHEBI:13193"/>
        <dbReference type="ChEBI" id="CHEBI:15378"/>
        <dbReference type="ChEBI" id="CHEBI:17319"/>
        <dbReference type="ChEBI" id="CHEBI:17499"/>
        <dbReference type="ChEBI" id="CHEBI:29917"/>
        <dbReference type="ChEBI" id="CHEBI:29961"/>
        <dbReference type="ChEBI" id="CHEBI:57844"/>
        <dbReference type="ChEBI" id="CHEBI:57856"/>
        <dbReference type="ChEBI" id="CHEBI:59789"/>
        <dbReference type="ChEBI" id="CHEBI:64428"/>
        <dbReference type="ChEBI" id="CHEBI:73599"/>
        <dbReference type="EC" id="2.8.4.4"/>
    </reaction>
</comment>
<comment type="cofactor">
    <cofactor evidence="1">
        <name>[4Fe-4S] cluster</name>
        <dbReference type="ChEBI" id="CHEBI:49883"/>
    </cofactor>
    <text evidence="1">Binds 2 [4Fe-4S] clusters. One cluster is coordinated with 3 cysteines and an exchangeable S-adenosyl-L-methionine.</text>
</comment>
<comment type="subcellular location">
    <subcellularLocation>
        <location evidence="1">Cytoplasm</location>
    </subcellularLocation>
</comment>
<comment type="similarity">
    <text evidence="1">Belongs to the methylthiotransferase family. RimO subfamily.</text>
</comment>
<comment type="sequence caution" evidence="3">
    <conflict type="erroneous initiation">
        <sequence resource="EMBL-CDS" id="ABD02984"/>
    </conflict>
</comment>
<protein>
    <recommendedName>
        <fullName evidence="1">Ribosomal protein uS12 methylthiotransferase RimO</fullName>
        <shortName evidence="1">uS12 MTTase</shortName>
        <shortName evidence="1">uS12 methylthiotransferase</shortName>
        <ecNumber evidence="1">2.8.4.4</ecNumber>
    </recommendedName>
    <alternativeName>
        <fullName evidence="1">Ribosomal protein uS12 (aspartate-C(3))-methylthiotransferase</fullName>
    </alternativeName>
    <alternativeName>
        <fullName evidence="1">Ribosome maturation factor RimO</fullName>
    </alternativeName>
</protein>
<evidence type="ECO:0000255" key="1">
    <source>
        <dbReference type="HAMAP-Rule" id="MF_01865"/>
    </source>
</evidence>
<evidence type="ECO:0000255" key="2">
    <source>
        <dbReference type="PROSITE-ProRule" id="PRU01266"/>
    </source>
</evidence>
<evidence type="ECO:0000305" key="3"/>
<organism>
    <name type="scientific">Synechococcus sp. (strain JA-2-3B'a(2-13))</name>
    <name type="common">Cyanobacteria bacterium Yellowstone B-Prime</name>
    <dbReference type="NCBI Taxonomy" id="321332"/>
    <lineage>
        <taxon>Bacteria</taxon>
        <taxon>Bacillati</taxon>
        <taxon>Cyanobacteriota</taxon>
        <taxon>Cyanophyceae</taxon>
        <taxon>Synechococcales</taxon>
        <taxon>Synechococcaceae</taxon>
        <taxon>Synechococcus</taxon>
    </lineage>
</organism>
<dbReference type="EC" id="2.8.4.4" evidence="1"/>
<dbReference type="EMBL" id="CP000240">
    <property type="protein sequence ID" value="ABD02984.1"/>
    <property type="status" value="ALT_INIT"/>
    <property type="molecule type" value="Genomic_DNA"/>
</dbReference>
<dbReference type="RefSeq" id="WP_202943699.1">
    <property type="nucleotide sequence ID" value="NC_007776.1"/>
</dbReference>
<dbReference type="SMR" id="Q2JK17"/>
<dbReference type="STRING" id="321332.CYB_2037"/>
<dbReference type="KEGG" id="cyb:CYB_2037"/>
<dbReference type="eggNOG" id="COG0621">
    <property type="taxonomic scope" value="Bacteria"/>
</dbReference>
<dbReference type="HOGENOM" id="CLU_018697_0_1_3"/>
<dbReference type="Proteomes" id="UP000001938">
    <property type="component" value="Chromosome"/>
</dbReference>
<dbReference type="GO" id="GO:0005829">
    <property type="term" value="C:cytosol"/>
    <property type="evidence" value="ECO:0007669"/>
    <property type="project" value="TreeGrafter"/>
</dbReference>
<dbReference type="GO" id="GO:0051539">
    <property type="term" value="F:4 iron, 4 sulfur cluster binding"/>
    <property type="evidence" value="ECO:0007669"/>
    <property type="project" value="UniProtKB-UniRule"/>
</dbReference>
<dbReference type="GO" id="GO:0035599">
    <property type="term" value="F:aspartic acid methylthiotransferase activity"/>
    <property type="evidence" value="ECO:0007669"/>
    <property type="project" value="TreeGrafter"/>
</dbReference>
<dbReference type="GO" id="GO:0046872">
    <property type="term" value="F:metal ion binding"/>
    <property type="evidence" value="ECO:0007669"/>
    <property type="project" value="UniProtKB-KW"/>
</dbReference>
<dbReference type="GO" id="GO:0103039">
    <property type="term" value="F:protein methylthiotransferase activity"/>
    <property type="evidence" value="ECO:0007669"/>
    <property type="project" value="UniProtKB-EC"/>
</dbReference>
<dbReference type="GO" id="GO:0006400">
    <property type="term" value="P:tRNA modification"/>
    <property type="evidence" value="ECO:0007669"/>
    <property type="project" value="InterPro"/>
</dbReference>
<dbReference type="CDD" id="cd01335">
    <property type="entry name" value="Radical_SAM"/>
    <property type="match status" value="1"/>
</dbReference>
<dbReference type="FunFam" id="3.80.30.20:FF:000001">
    <property type="entry name" value="tRNA-2-methylthio-N(6)-dimethylallyladenosine synthase 2"/>
    <property type="match status" value="1"/>
</dbReference>
<dbReference type="Gene3D" id="3.40.50.12160">
    <property type="entry name" value="Methylthiotransferase, N-terminal domain"/>
    <property type="match status" value="1"/>
</dbReference>
<dbReference type="Gene3D" id="2.40.50.140">
    <property type="entry name" value="Nucleic acid-binding proteins"/>
    <property type="match status" value="1"/>
</dbReference>
<dbReference type="Gene3D" id="3.80.30.20">
    <property type="entry name" value="tm_1862 like domain"/>
    <property type="match status" value="1"/>
</dbReference>
<dbReference type="HAMAP" id="MF_01865">
    <property type="entry name" value="MTTase_RimO"/>
    <property type="match status" value="1"/>
</dbReference>
<dbReference type="InterPro" id="IPR006638">
    <property type="entry name" value="Elp3/MiaA/NifB-like_rSAM"/>
</dbReference>
<dbReference type="InterPro" id="IPR005839">
    <property type="entry name" value="Methylthiotransferase"/>
</dbReference>
<dbReference type="InterPro" id="IPR020612">
    <property type="entry name" value="Methylthiotransferase_CS"/>
</dbReference>
<dbReference type="InterPro" id="IPR013848">
    <property type="entry name" value="Methylthiotransferase_N"/>
</dbReference>
<dbReference type="InterPro" id="IPR038135">
    <property type="entry name" value="Methylthiotransferase_N_sf"/>
</dbReference>
<dbReference type="InterPro" id="IPR012340">
    <property type="entry name" value="NA-bd_OB-fold"/>
</dbReference>
<dbReference type="InterPro" id="IPR005840">
    <property type="entry name" value="Ribosomal_uS12_MeSTrfase_RimO"/>
</dbReference>
<dbReference type="InterPro" id="IPR007197">
    <property type="entry name" value="rSAM"/>
</dbReference>
<dbReference type="InterPro" id="IPR023404">
    <property type="entry name" value="rSAM_horseshoe"/>
</dbReference>
<dbReference type="InterPro" id="IPR002792">
    <property type="entry name" value="TRAM_dom"/>
</dbReference>
<dbReference type="NCBIfam" id="TIGR01125">
    <property type="entry name" value="30S ribosomal protein S12 methylthiotransferase RimO"/>
    <property type="match status" value="1"/>
</dbReference>
<dbReference type="NCBIfam" id="TIGR00089">
    <property type="entry name" value="MiaB/RimO family radical SAM methylthiotransferase"/>
    <property type="match status" value="1"/>
</dbReference>
<dbReference type="PANTHER" id="PTHR43837">
    <property type="entry name" value="RIBOSOMAL PROTEIN S12 METHYLTHIOTRANSFERASE RIMO"/>
    <property type="match status" value="1"/>
</dbReference>
<dbReference type="PANTHER" id="PTHR43837:SF1">
    <property type="entry name" value="RIBOSOMAL PROTEIN US12 METHYLTHIOTRANSFERASE RIMO"/>
    <property type="match status" value="1"/>
</dbReference>
<dbReference type="Pfam" id="PF04055">
    <property type="entry name" value="Radical_SAM"/>
    <property type="match status" value="1"/>
</dbReference>
<dbReference type="Pfam" id="PF18693">
    <property type="entry name" value="TRAM_2"/>
    <property type="match status" value="1"/>
</dbReference>
<dbReference type="Pfam" id="PF00919">
    <property type="entry name" value="UPF0004"/>
    <property type="match status" value="1"/>
</dbReference>
<dbReference type="SFLD" id="SFLDG01082">
    <property type="entry name" value="B12-binding_domain_containing"/>
    <property type="match status" value="1"/>
</dbReference>
<dbReference type="SFLD" id="SFLDG01061">
    <property type="entry name" value="methylthiotransferase"/>
    <property type="match status" value="1"/>
</dbReference>
<dbReference type="SFLD" id="SFLDF00274">
    <property type="entry name" value="ribosomal_protein_S12_methylth"/>
    <property type="match status" value="1"/>
</dbReference>
<dbReference type="SMART" id="SM00729">
    <property type="entry name" value="Elp3"/>
    <property type="match status" value="1"/>
</dbReference>
<dbReference type="SUPFAM" id="SSF102114">
    <property type="entry name" value="Radical SAM enzymes"/>
    <property type="match status" value="1"/>
</dbReference>
<dbReference type="PROSITE" id="PS51449">
    <property type="entry name" value="MTTASE_N"/>
    <property type="match status" value="1"/>
</dbReference>
<dbReference type="PROSITE" id="PS01278">
    <property type="entry name" value="MTTASE_RADICAL"/>
    <property type="match status" value="1"/>
</dbReference>
<dbReference type="PROSITE" id="PS51918">
    <property type="entry name" value="RADICAL_SAM"/>
    <property type="match status" value="1"/>
</dbReference>
<dbReference type="PROSITE" id="PS50926">
    <property type="entry name" value="TRAM"/>
    <property type="match status" value="1"/>
</dbReference>
<sequence length="473" mass="53061">MNGLEATVSSFPSVKDSVPLTRTAVQRTKASVAVLHLGCEKNRVDTEHMLGLLAQAGYRVDGDEESANYVIVNTCSFIEAARRESVSTLMELAVQGKKIIIAGCLAQHFQEELLQEIPEAVAIVGTGDYHQIVQIIERVERGERVNAVTSSLDYIADETVPRYRTTHAPVAYLRVAEGCNYRCSFCIIPHLRGDQRSRSIESILREAEQLAEEGVQELILISQITTHYGIDLYGEPRLADLIRALGKIPIPWIRMLYAYPTGVTPAVVEAIQETPNFLPYLDLPLQHSHPQILKAMNRPWQGQVNDRVIERLRQALPNAVLRTSFIVGFPGETEEHFQHLLDFVQRHQFDHVGVFTFSPEEGTPAYHLPHQVPEAVKQERRARLMQVQQGITFRRNREQVGRVVPVLLEQENPRTGEWIGRSPRFAPEVDGVVYVQGQGSLGSLVPVQITRAEPYDLFGQVVAAPEGFSWSGR</sequence>
<keyword id="KW-0004">4Fe-4S</keyword>
<keyword id="KW-0963">Cytoplasm</keyword>
<keyword id="KW-0408">Iron</keyword>
<keyword id="KW-0411">Iron-sulfur</keyword>
<keyword id="KW-0479">Metal-binding</keyword>
<keyword id="KW-1185">Reference proteome</keyword>
<keyword id="KW-0949">S-adenosyl-L-methionine</keyword>
<keyword id="KW-0808">Transferase</keyword>
<accession>Q2JK17</accession>
<proteinExistence type="inferred from homology"/>
<reference key="1">
    <citation type="journal article" date="2007" name="ISME J.">
        <title>Population level functional diversity in a microbial community revealed by comparative genomic and metagenomic analyses.</title>
        <authorList>
            <person name="Bhaya D."/>
            <person name="Grossman A.R."/>
            <person name="Steunou A.-S."/>
            <person name="Khuri N."/>
            <person name="Cohan F.M."/>
            <person name="Hamamura N."/>
            <person name="Melendrez M.C."/>
            <person name="Bateson M.M."/>
            <person name="Ward D.M."/>
            <person name="Heidelberg J.F."/>
        </authorList>
    </citation>
    <scope>NUCLEOTIDE SEQUENCE [LARGE SCALE GENOMIC DNA]</scope>
    <source>
        <strain>JA-2-3B'a(2-13)</strain>
    </source>
</reference>
<feature type="chain" id="PRO_0000375035" description="Ribosomal protein uS12 methylthiotransferase RimO">
    <location>
        <begin position="1"/>
        <end position="473"/>
    </location>
</feature>
<feature type="domain" description="MTTase N-terminal" evidence="1">
    <location>
        <begin position="30"/>
        <end position="141"/>
    </location>
</feature>
<feature type="domain" description="Radical SAM core" evidence="2">
    <location>
        <begin position="165"/>
        <end position="394"/>
    </location>
</feature>
<feature type="domain" description="TRAM" evidence="1">
    <location>
        <begin position="397"/>
        <end position="463"/>
    </location>
</feature>
<feature type="binding site" evidence="1">
    <location>
        <position position="39"/>
    </location>
    <ligand>
        <name>[4Fe-4S] cluster</name>
        <dbReference type="ChEBI" id="CHEBI:49883"/>
        <label>1</label>
    </ligand>
</feature>
<feature type="binding site" evidence="1">
    <location>
        <position position="75"/>
    </location>
    <ligand>
        <name>[4Fe-4S] cluster</name>
        <dbReference type="ChEBI" id="CHEBI:49883"/>
        <label>1</label>
    </ligand>
</feature>
<feature type="binding site" evidence="1">
    <location>
        <position position="104"/>
    </location>
    <ligand>
        <name>[4Fe-4S] cluster</name>
        <dbReference type="ChEBI" id="CHEBI:49883"/>
        <label>1</label>
    </ligand>
</feature>
<feature type="binding site" evidence="1">
    <location>
        <position position="179"/>
    </location>
    <ligand>
        <name>[4Fe-4S] cluster</name>
        <dbReference type="ChEBI" id="CHEBI:49883"/>
        <label>2</label>
        <note>4Fe-4S-S-AdoMet</note>
    </ligand>
</feature>
<feature type="binding site" evidence="1">
    <location>
        <position position="183"/>
    </location>
    <ligand>
        <name>[4Fe-4S] cluster</name>
        <dbReference type="ChEBI" id="CHEBI:49883"/>
        <label>2</label>
        <note>4Fe-4S-S-AdoMet</note>
    </ligand>
</feature>
<feature type="binding site" evidence="1">
    <location>
        <position position="186"/>
    </location>
    <ligand>
        <name>[4Fe-4S] cluster</name>
        <dbReference type="ChEBI" id="CHEBI:49883"/>
        <label>2</label>
        <note>4Fe-4S-S-AdoMet</note>
    </ligand>
</feature>
<gene>
    <name evidence="1" type="primary">rimO</name>
    <name type="ordered locus">CYB_2037</name>
</gene>